<evidence type="ECO:0000250" key="1"/>
<evidence type="ECO:0000256" key="2">
    <source>
        <dbReference type="SAM" id="MobiDB-lite"/>
    </source>
</evidence>
<evidence type="ECO:0000305" key="3"/>
<accession>Q6ZGL4</accession>
<accession>A3A2G8</accession>
<accession>B7E8S0</accession>
<accession>Q0E4I4</accession>
<sequence length="380" mass="42349">MAAQRDDEAGWSAEAARRVWGGAVPLQVHLHDADVTTLPPPPPFLTLGPRIGYLPLLVPIIKAHFSSTLPPGIDTVWFEYKGLPLKWYIPIGVLYDLLCADPERPWNLTVHFRGYPSEILTLCDGEDSVKWSYMNSLKEAAFIITGNSKNVMNMSQADQGALWQSVMKGNLDGYMNISTRLKLGPFEEDCLVRTSSVEGQQGSDEPESPGSGKPCRVPVRLYVRSVQEDLYDLEDALPVGDWESISYINRPFEVRREEGRSYITLEHALKTLLPEFFSSKASRIPDDSETAPQAPDSAPNDDSDVTPRSCEKLESSASSSPQEANVANKGKIVKLVRVQGIEVDMDIPFLWVANNLKNPECYLHICVYVGTRKREPKDGR</sequence>
<feature type="chain" id="PRO_0000250586" description="Autophagy protein 5">
    <location>
        <begin position="1"/>
        <end position="380"/>
    </location>
</feature>
<feature type="region of interest" description="Disordered" evidence="2">
    <location>
        <begin position="194"/>
        <end position="214"/>
    </location>
</feature>
<feature type="region of interest" description="Disordered" evidence="2">
    <location>
        <begin position="283"/>
        <end position="309"/>
    </location>
</feature>
<feature type="compositionally biased region" description="Polar residues" evidence="2">
    <location>
        <begin position="194"/>
        <end position="203"/>
    </location>
</feature>
<feature type="cross-link" description="Glycyl lysine isopeptide (Lys-Gly) (interchain with G-Cter in ATG12)" evidence="1">
    <location>
        <position position="138"/>
    </location>
</feature>
<feature type="sequence conflict" description="In Ref. 4; CM000139." evidence="3" ref="4">
    <original>P</original>
    <variation>T</variation>
    <location>
        <position position="41"/>
    </location>
</feature>
<keyword id="KW-0072">Autophagy</keyword>
<keyword id="KW-0963">Cytoplasm</keyword>
<keyword id="KW-1017">Isopeptide bond</keyword>
<keyword id="KW-0653">Protein transport</keyword>
<keyword id="KW-1185">Reference proteome</keyword>
<keyword id="KW-0813">Transport</keyword>
<keyword id="KW-0832">Ubl conjugation</keyword>
<proteinExistence type="evidence at transcript level"/>
<gene>
    <name type="primary">ATG5</name>
    <name type="synonym">APG5</name>
    <name type="ordered locus">Os02g0117800</name>
    <name type="ordered locus">LOC_Os02g02570</name>
    <name type="ORF">OJ1217_F02.1</name>
    <name type="ORF">OJ1442_E05.32</name>
    <name type="ORF">OsJ_004990</name>
</gene>
<comment type="function">
    <text evidence="1">Required for autophagy. Conjugation to ATG12 is essential for plant nutrient recycling (By similarity).</text>
</comment>
<comment type="subunit">
    <text evidence="1">Conjugated to ATG12.</text>
</comment>
<comment type="subcellular location">
    <subcellularLocation>
        <location evidence="1">Cytoplasm</location>
    </subcellularLocation>
</comment>
<comment type="PTM">
    <text evidence="1">Conjugated to ATG12; which is essential for autophagy.</text>
</comment>
<comment type="similarity">
    <text evidence="3">Belongs to the ATG5 family.</text>
</comment>
<dbReference type="EMBL" id="AP004084">
    <property type="protein sequence ID" value="BAD07611.1"/>
    <property type="molecule type" value="Genomic_DNA"/>
</dbReference>
<dbReference type="EMBL" id="AP004121">
    <property type="protein sequence ID" value="BAD07730.1"/>
    <property type="molecule type" value="Genomic_DNA"/>
</dbReference>
<dbReference type="EMBL" id="AP008208">
    <property type="protein sequence ID" value="BAF07604.1"/>
    <property type="molecule type" value="Genomic_DNA"/>
</dbReference>
<dbReference type="EMBL" id="AP014958">
    <property type="protein sequence ID" value="BAS76673.1"/>
    <property type="molecule type" value="Genomic_DNA"/>
</dbReference>
<dbReference type="EMBL" id="CM000139">
    <property type="status" value="NOT_ANNOTATED_CDS"/>
    <property type="molecule type" value="Genomic_DNA"/>
</dbReference>
<dbReference type="EMBL" id="AK063557">
    <property type="protein sequence ID" value="BAG88767.1"/>
    <property type="molecule type" value="mRNA"/>
</dbReference>
<dbReference type="RefSeq" id="XP_015627449.1">
    <property type="nucleotide sequence ID" value="XM_015771963.1"/>
</dbReference>
<dbReference type="SMR" id="Q6ZGL4"/>
<dbReference type="FunCoup" id="Q6ZGL4">
    <property type="interactions" value="80"/>
</dbReference>
<dbReference type="STRING" id="39947.Q6ZGL4"/>
<dbReference type="PaxDb" id="39947-Q6ZGL4"/>
<dbReference type="EnsemblPlants" id="Os02t0117800-01">
    <property type="protein sequence ID" value="Os02t0117800-01"/>
    <property type="gene ID" value="Os02g0117800"/>
</dbReference>
<dbReference type="Gramene" id="Os02t0117800-01">
    <property type="protein sequence ID" value="Os02t0117800-01"/>
    <property type="gene ID" value="Os02g0117800"/>
</dbReference>
<dbReference type="KEGG" id="dosa:Os02g0117800"/>
<dbReference type="eggNOG" id="KOG2976">
    <property type="taxonomic scope" value="Eukaryota"/>
</dbReference>
<dbReference type="HOGENOM" id="CLU_051894_0_0_1"/>
<dbReference type="InParanoid" id="Q6ZGL4"/>
<dbReference type="OMA" id="GYPANIL"/>
<dbReference type="OrthoDB" id="272162at2759"/>
<dbReference type="Proteomes" id="UP000000763">
    <property type="component" value="Chromosome 2"/>
</dbReference>
<dbReference type="Proteomes" id="UP000007752">
    <property type="component" value="Chromosome 2"/>
</dbReference>
<dbReference type="Proteomes" id="UP000059680">
    <property type="component" value="Chromosome 2"/>
</dbReference>
<dbReference type="GO" id="GO:0034274">
    <property type="term" value="C:Atg12-Atg5-Atg16 complex"/>
    <property type="evidence" value="ECO:0000318"/>
    <property type="project" value="GO_Central"/>
</dbReference>
<dbReference type="GO" id="GO:0005776">
    <property type="term" value="C:autophagosome"/>
    <property type="evidence" value="ECO:0000318"/>
    <property type="project" value="GO_Central"/>
</dbReference>
<dbReference type="GO" id="GO:0061908">
    <property type="term" value="C:phagophore"/>
    <property type="evidence" value="ECO:0000318"/>
    <property type="project" value="GO_Central"/>
</dbReference>
<dbReference type="GO" id="GO:0034045">
    <property type="term" value="C:phagophore assembly site membrane"/>
    <property type="evidence" value="ECO:0000318"/>
    <property type="project" value="GO_Central"/>
</dbReference>
<dbReference type="GO" id="GO:0035973">
    <property type="term" value="P:aggrephagy"/>
    <property type="evidence" value="ECO:0000318"/>
    <property type="project" value="GO_Central"/>
</dbReference>
<dbReference type="GO" id="GO:0000045">
    <property type="term" value="P:autophagosome assembly"/>
    <property type="evidence" value="ECO:0000318"/>
    <property type="project" value="GO_Central"/>
</dbReference>
<dbReference type="GO" id="GO:0006995">
    <property type="term" value="P:cellular response to nitrogen starvation"/>
    <property type="evidence" value="ECO:0000318"/>
    <property type="project" value="GO_Central"/>
</dbReference>
<dbReference type="GO" id="GO:0050832">
    <property type="term" value="P:defense response to fungus"/>
    <property type="evidence" value="ECO:0007669"/>
    <property type="project" value="EnsemblPlants"/>
</dbReference>
<dbReference type="GO" id="GO:0010150">
    <property type="term" value="P:leaf senescence"/>
    <property type="evidence" value="ECO:0007669"/>
    <property type="project" value="EnsemblPlants"/>
</dbReference>
<dbReference type="GO" id="GO:0000423">
    <property type="term" value="P:mitophagy"/>
    <property type="evidence" value="ECO:0000318"/>
    <property type="project" value="GO_Central"/>
</dbReference>
<dbReference type="GO" id="GO:0034727">
    <property type="term" value="P:piecemeal microautophagy of the nucleus"/>
    <property type="evidence" value="ECO:0000318"/>
    <property type="project" value="GO_Central"/>
</dbReference>
<dbReference type="GO" id="GO:0015031">
    <property type="term" value="P:protein transport"/>
    <property type="evidence" value="ECO:0007669"/>
    <property type="project" value="UniProtKB-KW"/>
</dbReference>
<dbReference type="FunFam" id="1.10.246.190:FF:000002">
    <property type="entry name" value="Autophagy protein 5"/>
    <property type="match status" value="1"/>
</dbReference>
<dbReference type="FunFam" id="3.10.20.620:FF:000002">
    <property type="entry name" value="Autophagy protein 5"/>
    <property type="match status" value="1"/>
</dbReference>
<dbReference type="FunFam" id="3.10.20.90:FF:000370">
    <property type="entry name" value="Autophagy protein 5"/>
    <property type="match status" value="1"/>
</dbReference>
<dbReference type="Gene3D" id="3.10.20.620">
    <property type="match status" value="1"/>
</dbReference>
<dbReference type="Gene3D" id="1.10.246.190">
    <property type="entry name" value="Autophagy protein Apg5, helix rich domain"/>
    <property type="match status" value="1"/>
</dbReference>
<dbReference type="Gene3D" id="3.10.20.90">
    <property type="entry name" value="Phosphatidylinositol 3-kinase Catalytic Subunit, Chain A, domain 1"/>
    <property type="match status" value="1"/>
</dbReference>
<dbReference type="InterPro" id="IPR007239">
    <property type="entry name" value="Atg5"/>
</dbReference>
<dbReference type="InterPro" id="IPR048940">
    <property type="entry name" value="ATG5_HBR"/>
</dbReference>
<dbReference type="InterPro" id="IPR042526">
    <property type="entry name" value="Atg5_HR"/>
</dbReference>
<dbReference type="InterPro" id="IPR048939">
    <property type="entry name" value="ATG5_UblA"/>
</dbReference>
<dbReference type="InterPro" id="IPR042527">
    <property type="entry name" value="Atg5_UblA_dom_sf"/>
</dbReference>
<dbReference type="InterPro" id="IPR048318">
    <property type="entry name" value="ATG5_UblB"/>
</dbReference>
<dbReference type="PANTHER" id="PTHR13040">
    <property type="entry name" value="AUTOPHAGY PROTEIN 5"/>
    <property type="match status" value="1"/>
</dbReference>
<dbReference type="PANTHER" id="PTHR13040:SF2">
    <property type="entry name" value="AUTOPHAGY PROTEIN 5"/>
    <property type="match status" value="1"/>
</dbReference>
<dbReference type="Pfam" id="PF20637">
    <property type="entry name" value="ATG5_HBR"/>
    <property type="match status" value="1"/>
</dbReference>
<dbReference type="Pfam" id="PF20638">
    <property type="entry name" value="ATG5_UblA"/>
    <property type="match status" value="1"/>
</dbReference>
<dbReference type="Pfam" id="PF04106">
    <property type="entry name" value="ATG5_UblB"/>
    <property type="match status" value="1"/>
</dbReference>
<reference key="1">
    <citation type="journal article" date="2005" name="Nature">
        <title>The map-based sequence of the rice genome.</title>
        <authorList>
            <consortium name="International rice genome sequencing project (IRGSP)"/>
        </authorList>
    </citation>
    <scope>NUCLEOTIDE SEQUENCE [LARGE SCALE GENOMIC DNA]</scope>
    <source>
        <strain>cv. Nipponbare</strain>
    </source>
</reference>
<reference key="2">
    <citation type="journal article" date="2008" name="Nucleic Acids Res.">
        <title>The rice annotation project database (RAP-DB): 2008 update.</title>
        <authorList>
            <consortium name="The rice annotation project (RAP)"/>
        </authorList>
    </citation>
    <scope>GENOME REANNOTATION</scope>
    <source>
        <strain>cv. Nipponbare</strain>
    </source>
</reference>
<reference key="3">
    <citation type="journal article" date="2013" name="Rice">
        <title>Improvement of the Oryza sativa Nipponbare reference genome using next generation sequence and optical map data.</title>
        <authorList>
            <person name="Kawahara Y."/>
            <person name="de la Bastide M."/>
            <person name="Hamilton J.P."/>
            <person name="Kanamori H."/>
            <person name="McCombie W.R."/>
            <person name="Ouyang S."/>
            <person name="Schwartz D.C."/>
            <person name="Tanaka T."/>
            <person name="Wu J."/>
            <person name="Zhou S."/>
            <person name="Childs K.L."/>
            <person name="Davidson R.M."/>
            <person name="Lin H."/>
            <person name="Quesada-Ocampo L."/>
            <person name="Vaillancourt B."/>
            <person name="Sakai H."/>
            <person name="Lee S.S."/>
            <person name="Kim J."/>
            <person name="Numa H."/>
            <person name="Itoh T."/>
            <person name="Buell C.R."/>
            <person name="Matsumoto T."/>
        </authorList>
    </citation>
    <scope>GENOME REANNOTATION</scope>
    <source>
        <strain>cv. Nipponbare</strain>
    </source>
</reference>
<reference key="4">
    <citation type="journal article" date="2005" name="PLoS Biol.">
        <title>The genomes of Oryza sativa: a history of duplications.</title>
        <authorList>
            <person name="Yu J."/>
            <person name="Wang J."/>
            <person name="Lin W."/>
            <person name="Li S."/>
            <person name="Li H."/>
            <person name="Zhou J."/>
            <person name="Ni P."/>
            <person name="Dong W."/>
            <person name="Hu S."/>
            <person name="Zeng C."/>
            <person name="Zhang J."/>
            <person name="Zhang Y."/>
            <person name="Li R."/>
            <person name="Xu Z."/>
            <person name="Li S."/>
            <person name="Li X."/>
            <person name="Zheng H."/>
            <person name="Cong L."/>
            <person name="Lin L."/>
            <person name="Yin J."/>
            <person name="Geng J."/>
            <person name="Li G."/>
            <person name="Shi J."/>
            <person name="Liu J."/>
            <person name="Lv H."/>
            <person name="Li J."/>
            <person name="Wang J."/>
            <person name="Deng Y."/>
            <person name="Ran L."/>
            <person name="Shi X."/>
            <person name="Wang X."/>
            <person name="Wu Q."/>
            <person name="Li C."/>
            <person name="Ren X."/>
            <person name="Wang J."/>
            <person name="Wang X."/>
            <person name="Li D."/>
            <person name="Liu D."/>
            <person name="Zhang X."/>
            <person name="Ji Z."/>
            <person name="Zhao W."/>
            <person name="Sun Y."/>
            <person name="Zhang Z."/>
            <person name="Bao J."/>
            <person name="Han Y."/>
            <person name="Dong L."/>
            <person name="Ji J."/>
            <person name="Chen P."/>
            <person name="Wu S."/>
            <person name="Liu J."/>
            <person name="Xiao Y."/>
            <person name="Bu D."/>
            <person name="Tan J."/>
            <person name="Yang L."/>
            <person name="Ye C."/>
            <person name="Zhang J."/>
            <person name="Xu J."/>
            <person name="Zhou Y."/>
            <person name="Yu Y."/>
            <person name="Zhang B."/>
            <person name="Zhuang S."/>
            <person name="Wei H."/>
            <person name="Liu B."/>
            <person name="Lei M."/>
            <person name="Yu H."/>
            <person name="Li Y."/>
            <person name="Xu H."/>
            <person name="Wei S."/>
            <person name="He X."/>
            <person name="Fang L."/>
            <person name="Zhang Z."/>
            <person name="Zhang Y."/>
            <person name="Huang X."/>
            <person name="Su Z."/>
            <person name="Tong W."/>
            <person name="Li J."/>
            <person name="Tong Z."/>
            <person name="Li S."/>
            <person name="Ye J."/>
            <person name="Wang L."/>
            <person name="Fang L."/>
            <person name="Lei T."/>
            <person name="Chen C.-S."/>
            <person name="Chen H.-C."/>
            <person name="Xu Z."/>
            <person name="Li H."/>
            <person name="Huang H."/>
            <person name="Zhang F."/>
            <person name="Xu H."/>
            <person name="Li N."/>
            <person name="Zhao C."/>
            <person name="Li S."/>
            <person name="Dong L."/>
            <person name="Huang Y."/>
            <person name="Li L."/>
            <person name="Xi Y."/>
            <person name="Qi Q."/>
            <person name="Li W."/>
            <person name="Zhang B."/>
            <person name="Hu W."/>
            <person name="Zhang Y."/>
            <person name="Tian X."/>
            <person name="Jiao Y."/>
            <person name="Liang X."/>
            <person name="Jin J."/>
            <person name="Gao L."/>
            <person name="Zheng W."/>
            <person name="Hao B."/>
            <person name="Liu S.-M."/>
            <person name="Wang W."/>
            <person name="Yuan L."/>
            <person name="Cao M."/>
            <person name="McDermott J."/>
            <person name="Samudrala R."/>
            <person name="Wang J."/>
            <person name="Wong G.K.-S."/>
            <person name="Yang H."/>
        </authorList>
    </citation>
    <scope>NUCLEOTIDE SEQUENCE [LARGE SCALE GENOMIC DNA]</scope>
    <source>
        <strain>cv. Nipponbare</strain>
    </source>
</reference>
<reference key="5">
    <citation type="journal article" date="2003" name="Science">
        <title>Collection, mapping, and annotation of over 28,000 cDNA clones from japonica rice.</title>
        <authorList>
            <consortium name="The rice full-length cDNA consortium"/>
        </authorList>
    </citation>
    <scope>NUCLEOTIDE SEQUENCE [LARGE SCALE MRNA]</scope>
    <source>
        <strain>cv. Nipponbare</strain>
    </source>
</reference>
<protein>
    <recommendedName>
        <fullName>Autophagy protein 5</fullName>
    </recommendedName>
</protein>
<name>ATG5_ORYSJ</name>
<organism>
    <name type="scientific">Oryza sativa subsp. japonica</name>
    <name type="common">Rice</name>
    <dbReference type="NCBI Taxonomy" id="39947"/>
    <lineage>
        <taxon>Eukaryota</taxon>
        <taxon>Viridiplantae</taxon>
        <taxon>Streptophyta</taxon>
        <taxon>Embryophyta</taxon>
        <taxon>Tracheophyta</taxon>
        <taxon>Spermatophyta</taxon>
        <taxon>Magnoliopsida</taxon>
        <taxon>Liliopsida</taxon>
        <taxon>Poales</taxon>
        <taxon>Poaceae</taxon>
        <taxon>BOP clade</taxon>
        <taxon>Oryzoideae</taxon>
        <taxon>Oryzeae</taxon>
        <taxon>Oryzinae</taxon>
        <taxon>Oryza</taxon>
        <taxon>Oryza sativa</taxon>
    </lineage>
</organism>